<keyword id="KW-0903">Direct protein sequencing</keyword>
<keyword id="KW-0378">Hydrolase</keyword>
<keyword id="KW-0645">Protease</keyword>
<keyword id="KW-0788">Thiol protease</keyword>
<reference key="1">
    <citation type="journal article" date="1993" name="FEMS Microbiol. Lett.">
        <title>Purification of cysteine proteinases from trichomonads using bacitracin-sepharose.</title>
        <authorList>
            <person name="Irvine J.W."/>
            <person name="Coombs G.H."/>
            <person name="North M.J."/>
        </authorList>
    </citation>
    <scope>PROTEIN SEQUENCE</scope>
</reference>
<sequence>ADSLDWREKGVVNSIKDQAQXGS</sequence>
<feature type="chain" id="PRO_0000050545" description="Cysteine proteinase">
    <location>
        <begin position="1"/>
        <end position="23" status="greater than"/>
    </location>
</feature>
<feature type="region of interest" description="Disordered" evidence="4">
    <location>
        <begin position="1"/>
        <end position="23"/>
    </location>
</feature>
<feature type="compositionally biased region" description="Basic and acidic residues" evidence="4">
    <location>
        <begin position="1"/>
        <end position="10"/>
    </location>
</feature>
<feature type="non-terminal residue">
    <location>
        <position position="23"/>
    </location>
</feature>
<comment type="similarity">
    <text evidence="1 2 3">Belongs to the peptidase C1 family.</text>
</comment>
<proteinExistence type="evidence at protein level"/>
<organism>
    <name type="scientific">Tritrichomonas foetus</name>
    <name type="common">Trichomonas foetus</name>
    <name type="synonym">Tritrichomonas suis</name>
    <dbReference type="NCBI Taxonomy" id="56690"/>
    <lineage>
        <taxon>Eukaryota</taxon>
        <taxon>Metamonada</taxon>
        <taxon>Parabasalia</taxon>
        <taxon>Tritrichomonadida</taxon>
        <taxon>Tritrichomonadidae</taxon>
        <taxon>Tritrichomonas</taxon>
    </lineage>
</organism>
<name>CYSP_TRIFO</name>
<dbReference type="EC" id="3.4.22.-"/>
<dbReference type="MEROPS" id="C01.093"/>
<dbReference type="GO" id="GO:0008234">
    <property type="term" value="F:cysteine-type peptidase activity"/>
    <property type="evidence" value="ECO:0007669"/>
    <property type="project" value="UniProtKB-KW"/>
</dbReference>
<dbReference type="GO" id="GO:0006508">
    <property type="term" value="P:proteolysis"/>
    <property type="evidence" value="ECO:0007669"/>
    <property type="project" value="UniProtKB-KW"/>
</dbReference>
<dbReference type="InterPro" id="IPR038765">
    <property type="entry name" value="Papain-like_cys_pep_sf"/>
</dbReference>
<dbReference type="SUPFAM" id="SSF54001">
    <property type="entry name" value="Cysteine proteinases"/>
    <property type="match status" value="1"/>
</dbReference>
<evidence type="ECO:0000255" key="1">
    <source>
        <dbReference type="PROSITE-ProRule" id="PRU10088"/>
    </source>
</evidence>
<evidence type="ECO:0000255" key="2">
    <source>
        <dbReference type="PROSITE-ProRule" id="PRU10089"/>
    </source>
</evidence>
<evidence type="ECO:0000255" key="3">
    <source>
        <dbReference type="PROSITE-ProRule" id="PRU10090"/>
    </source>
</evidence>
<evidence type="ECO:0000256" key="4">
    <source>
        <dbReference type="SAM" id="MobiDB-lite"/>
    </source>
</evidence>
<accession>P33403</accession>
<protein>
    <recommendedName>
        <fullName>Cysteine proteinase</fullName>
        <ecNumber>3.4.22.-</ecNumber>
    </recommendedName>
</protein>